<accession>Q7YR71</accession>
<proteinExistence type="inferred from homology"/>
<name>CYC_TRACR</name>
<gene>
    <name type="primary">CYCS</name>
</gene>
<reference key="1">
    <citation type="journal article" date="2003" name="Proc. Natl. Acad. Sci. U.S.A.">
        <title>Implications of natural selection in shaping 99.4% nonsynonymous DNA identity between humans and chimpanzees: enlarging genus Homo.</title>
        <authorList>
            <person name="Wildman D.E."/>
            <person name="Uddin M."/>
            <person name="Liu G."/>
            <person name="Grossman L.I."/>
            <person name="Goodman M."/>
        </authorList>
    </citation>
    <scope>NUCLEOTIDE SEQUENCE [MRNA]</scope>
</reference>
<evidence type="ECO:0000250" key="1"/>
<evidence type="ECO:0000250" key="2">
    <source>
        <dbReference type="UniProtKB" id="P62894"/>
    </source>
</evidence>
<evidence type="ECO:0000250" key="3">
    <source>
        <dbReference type="UniProtKB" id="P62897"/>
    </source>
</evidence>
<evidence type="ECO:0000255" key="4">
    <source>
        <dbReference type="PROSITE-ProRule" id="PRU00433"/>
    </source>
</evidence>
<evidence type="ECO:0000256" key="5">
    <source>
        <dbReference type="SAM" id="MobiDB-lite"/>
    </source>
</evidence>
<evidence type="ECO:0000305" key="6"/>
<comment type="function">
    <text evidence="1">Electron carrier protein. The oxidized form of the cytochrome c heme group can accept an electron from the heme group of the cytochrome c1 subunit of cytochrome reductase. Cytochrome c then transfers this electron to the cytochrome oxidase complex, the final protein carrier in the mitochondrial electron-transport chain (By similarity).</text>
</comment>
<comment type="function">
    <text evidence="1">Plays a role in apoptosis. Suppression of the anti-apoptotic members or activation of the pro-apoptotic members of the Bcl-2 family leads to altered mitochondrial membrane permeability resulting in release of cytochrome c into the cytosol. Binding of cytochrome c to Apaf-1 triggers the activation of caspase-9, which then accelerates apoptosis by activating other caspases (By similarity).</text>
</comment>
<comment type="subcellular location">
    <subcellularLocation>
        <location>Mitochondrion intermembrane space</location>
    </subcellularLocation>
    <text>Loosely associated with the inner membrane.</text>
</comment>
<comment type="PTM">
    <text>Binds 1 heme c group covalently per subunit.</text>
</comment>
<comment type="PTM">
    <text evidence="1">Phosphorylation at Tyr-49 and Tyr-98 both reduce by half the turnover in the reaction with cytochrome c oxidase, down-regulating mitochondrial respiration.</text>
</comment>
<comment type="similarity">
    <text evidence="6">Belongs to the cytochrome c family.</text>
</comment>
<comment type="online information" name="Protein Spotlight">
    <link uri="https://www.proteinspotlight.org/back_issues/076"/>
    <text>Life shuttle - Issue 76 of November 2006</text>
</comment>
<keyword id="KW-0007">Acetylation</keyword>
<keyword id="KW-0053">Apoptosis</keyword>
<keyword id="KW-0249">Electron transport</keyword>
<keyword id="KW-0349">Heme</keyword>
<keyword id="KW-0408">Iron</keyword>
<keyword id="KW-0479">Metal-binding</keyword>
<keyword id="KW-0496">Mitochondrion</keyword>
<keyword id="KW-0597">Phosphoprotein</keyword>
<keyword id="KW-0679">Respiratory chain</keyword>
<keyword id="KW-0813">Transport</keyword>
<dbReference type="EMBL" id="AY268592">
    <property type="protein sequence ID" value="AAP49487.1"/>
    <property type="molecule type" value="mRNA"/>
</dbReference>
<dbReference type="SMR" id="Q7YR71"/>
<dbReference type="GO" id="GO:0005829">
    <property type="term" value="C:cytosol"/>
    <property type="evidence" value="ECO:0000250"/>
    <property type="project" value="UniProtKB"/>
</dbReference>
<dbReference type="GO" id="GO:0005758">
    <property type="term" value="C:mitochondrial intermembrane space"/>
    <property type="evidence" value="ECO:0007669"/>
    <property type="project" value="UniProtKB-SubCell"/>
</dbReference>
<dbReference type="GO" id="GO:0009055">
    <property type="term" value="F:electron transfer activity"/>
    <property type="evidence" value="ECO:0007669"/>
    <property type="project" value="InterPro"/>
</dbReference>
<dbReference type="GO" id="GO:0020037">
    <property type="term" value="F:heme binding"/>
    <property type="evidence" value="ECO:0007669"/>
    <property type="project" value="InterPro"/>
</dbReference>
<dbReference type="GO" id="GO:0046872">
    <property type="term" value="F:metal ion binding"/>
    <property type="evidence" value="ECO:0007669"/>
    <property type="project" value="UniProtKB-KW"/>
</dbReference>
<dbReference type="GO" id="GO:0006915">
    <property type="term" value="P:apoptotic process"/>
    <property type="evidence" value="ECO:0007669"/>
    <property type="project" value="UniProtKB-KW"/>
</dbReference>
<dbReference type="FunFam" id="1.10.760.10:FF:000008">
    <property type="entry name" value="Cytochrome c"/>
    <property type="match status" value="1"/>
</dbReference>
<dbReference type="Gene3D" id="1.10.760.10">
    <property type="entry name" value="Cytochrome c-like domain"/>
    <property type="match status" value="1"/>
</dbReference>
<dbReference type="InterPro" id="IPR009056">
    <property type="entry name" value="Cyt_c-like_dom"/>
</dbReference>
<dbReference type="InterPro" id="IPR036909">
    <property type="entry name" value="Cyt_c-like_dom_sf"/>
</dbReference>
<dbReference type="InterPro" id="IPR002327">
    <property type="entry name" value="Cyt_c_1A/1B"/>
</dbReference>
<dbReference type="PANTHER" id="PTHR11961">
    <property type="entry name" value="CYTOCHROME C"/>
    <property type="match status" value="1"/>
</dbReference>
<dbReference type="Pfam" id="PF00034">
    <property type="entry name" value="Cytochrom_C"/>
    <property type="match status" value="1"/>
</dbReference>
<dbReference type="PRINTS" id="PR00604">
    <property type="entry name" value="CYTCHRMECIAB"/>
</dbReference>
<dbReference type="SUPFAM" id="SSF46626">
    <property type="entry name" value="Cytochrome c"/>
    <property type="match status" value="1"/>
</dbReference>
<dbReference type="PROSITE" id="PS51007">
    <property type="entry name" value="CYTC"/>
    <property type="match status" value="1"/>
</dbReference>
<feature type="initiator methionine" description="Removed" evidence="2">
    <location>
        <position position="1"/>
    </location>
</feature>
<feature type="chain" id="PRO_0000108236" description="Cytochrome c">
    <location>
        <begin position="2"/>
        <end position="105"/>
    </location>
</feature>
<feature type="region of interest" description="Disordered" evidence="5">
    <location>
        <begin position="22"/>
        <end position="45"/>
    </location>
</feature>
<feature type="binding site" description="covalent" evidence="4">
    <location>
        <position position="15"/>
    </location>
    <ligand>
        <name>heme c</name>
        <dbReference type="ChEBI" id="CHEBI:61717"/>
    </ligand>
</feature>
<feature type="binding site" description="covalent" evidence="4">
    <location>
        <position position="18"/>
    </location>
    <ligand>
        <name>heme c</name>
        <dbReference type="ChEBI" id="CHEBI:61717"/>
    </ligand>
</feature>
<feature type="binding site" description="axial binding residue" evidence="4">
    <location>
        <position position="19"/>
    </location>
    <ligand>
        <name>heme c</name>
        <dbReference type="ChEBI" id="CHEBI:61717"/>
    </ligand>
    <ligandPart>
        <name>Fe</name>
        <dbReference type="ChEBI" id="CHEBI:18248"/>
    </ligandPart>
</feature>
<feature type="binding site" description="axial binding residue" evidence="4">
    <location>
        <position position="81"/>
    </location>
    <ligand>
        <name>heme c</name>
        <dbReference type="ChEBI" id="CHEBI:61717"/>
    </ligand>
    <ligandPart>
        <name>Fe</name>
        <dbReference type="ChEBI" id="CHEBI:18248"/>
    </ligandPart>
</feature>
<feature type="modified residue" description="N-acetylglycine" evidence="2">
    <location>
        <position position="2"/>
    </location>
</feature>
<feature type="modified residue" description="Phosphotyrosine" evidence="2">
    <location>
        <position position="49"/>
    </location>
</feature>
<feature type="modified residue" description="N6-succinyllysine" evidence="3">
    <location>
        <position position="56"/>
    </location>
</feature>
<feature type="modified residue" description="N6-acetyllysine; alternate" evidence="3">
    <location>
        <position position="73"/>
    </location>
</feature>
<feature type="modified residue" description="N6-succinyllysine; alternate" evidence="3">
    <location>
        <position position="73"/>
    </location>
</feature>
<feature type="modified residue" description="Phosphotyrosine" evidence="2">
    <location>
        <position position="98"/>
    </location>
</feature>
<feature type="modified residue" description="N6-acetyllysine" evidence="3">
    <location>
        <position position="100"/>
    </location>
</feature>
<organism>
    <name type="scientific">Trachypithecus cristatus</name>
    <name type="common">Silvered leaf-monkey</name>
    <name type="synonym">Presbytis cristata</name>
    <dbReference type="NCBI Taxonomy" id="122765"/>
    <lineage>
        <taxon>Eukaryota</taxon>
        <taxon>Metazoa</taxon>
        <taxon>Chordata</taxon>
        <taxon>Craniata</taxon>
        <taxon>Vertebrata</taxon>
        <taxon>Euteleostomi</taxon>
        <taxon>Mammalia</taxon>
        <taxon>Eutheria</taxon>
        <taxon>Euarchontoglires</taxon>
        <taxon>Primates</taxon>
        <taxon>Haplorrhini</taxon>
        <taxon>Catarrhini</taxon>
        <taxon>Cercopithecidae</taxon>
        <taxon>Colobinae</taxon>
        <taxon>Trachypithecus</taxon>
    </lineage>
</organism>
<protein>
    <recommendedName>
        <fullName>Cytochrome c</fullName>
    </recommendedName>
</protein>
<sequence>MGDVEKGKKILIMKCSQCHTVEKGGKHKTGPNHHGLFGRKTGQAPGYSYTAANKNKGITWGEDTLMEYLENPKKYIPGTKMIFVGIKKKEERADLIAYLKKATNE</sequence>